<proteinExistence type="evidence at transcript level"/>
<comment type="function">
    <text evidence="1">Involved in chronological cell aging. Extends cell viability after entry into the stationary phase probably through affecting the Pka1-dependent pathway negatively.</text>
</comment>
<comment type="subcellular location">
    <subcellularLocation>
        <location evidence="1">Nucleus</location>
    </subcellularLocation>
</comment>
<comment type="induction">
    <text evidence="1">Up-regulated transiently when the growth phase was changed from the log phase to the stationary phase.</text>
</comment>
<comment type="similarity">
    <text evidence="2">Belongs to the ecl1 family.</text>
</comment>
<protein>
    <recommendedName>
        <fullName>Extender of the chronological lifespan protein 1</fullName>
    </recommendedName>
</protein>
<name>ECL1_SCHPO</name>
<accession>C6Y4D3</accession>
<keyword id="KW-0539">Nucleus</keyword>
<keyword id="KW-1185">Reference proteome</keyword>
<organism>
    <name type="scientific">Schizosaccharomyces pombe (strain 972 / ATCC 24843)</name>
    <name type="common">Fission yeast</name>
    <dbReference type="NCBI Taxonomy" id="284812"/>
    <lineage>
        <taxon>Eukaryota</taxon>
        <taxon>Fungi</taxon>
        <taxon>Dikarya</taxon>
        <taxon>Ascomycota</taxon>
        <taxon>Taphrinomycotina</taxon>
        <taxon>Schizosaccharomycetes</taxon>
        <taxon>Schizosaccharomycetales</taxon>
        <taxon>Schizosaccharomycetaceae</taxon>
        <taxon>Schizosaccharomyces</taxon>
    </lineage>
</organism>
<reference key="1">
    <citation type="journal article" date="2002" name="Nature">
        <title>The genome sequence of Schizosaccharomyces pombe.</title>
        <authorList>
            <person name="Wood V."/>
            <person name="Gwilliam R."/>
            <person name="Rajandream M.A."/>
            <person name="Lyne M.H."/>
            <person name="Lyne R."/>
            <person name="Stewart A."/>
            <person name="Sgouros J.G."/>
            <person name="Peat N."/>
            <person name="Hayles J."/>
            <person name="Baker S.G."/>
            <person name="Basham D."/>
            <person name="Bowman S."/>
            <person name="Brooks K."/>
            <person name="Brown D."/>
            <person name="Brown S."/>
            <person name="Chillingworth T."/>
            <person name="Churcher C.M."/>
            <person name="Collins M."/>
            <person name="Connor R."/>
            <person name="Cronin A."/>
            <person name="Davis P."/>
            <person name="Feltwell T."/>
            <person name="Fraser A."/>
            <person name="Gentles S."/>
            <person name="Goble A."/>
            <person name="Hamlin N."/>
            <person name="Harris D.E."/>
            <person name="Hidalgo J."/>
            <person name="Hodgson G."/>
            <person name="Holroyd S."/>
            <person name="Hornsby T."/>
            <person name="Howarth S."/>
            <person name="Huckle E.J."/>
            <person name="Hunt S."/>
            <person name="Jagels K."/>
            <person name="James K.D."/>
            <person name="Jones L."/>
            <person name="Jones M."/>
            <person name="Leather S."/>
            <person name="McDonald S."/>
            <person name="McLean J."/>
            <person name="Mooney P."/>
            <person name="Moule S."/>
            <person name="Mungall K.L."/>
            <person name="Murphy L.D."/>
            <person name="Niblett D."/>
            <person name="Odell C."/>
            <person name="Oliver K."/>
            <person name="O'Neil S."/>
            <person name="Pearson D."/>
            <person name="Quail M.A."/>
            <person name="Rabbinowitsch E."/>
            <person name="Rutherford K.M."/>
            <person name="Rutter S."/>
            <person name="Saunders D."/>
            <person name="Seeger K."/>
            <person name="Sharp S."/>
            <person name="Skelton J."/>
            <person name="Simmonds M.N."/>
            <person name="Squares R."/>
            <person name="Squares S."/>
            <person name="Stevens K."/>
            <person name="Taylor K."/>
            <person name="Taylor R.G."/>
            <person name="Tivey A."/>
            <person name="Walsh S.V."/>
            <person name="Warren T."/>
            <person name="Whitehead S."/>
            <person name="Woodward J.R."/>
            <person name="Volckaert G."/>
            <person name="Aert R."/>
            <person name="Robben J."/>
            <person name="Grymonprez B."/>
            <person name="Weltjens I."/>
            <person name="Vanstreels E."/>
            <person name="Rieger M."/>
            <person name="Schaefer M."/>
            <person name="Mueller-Auer S."/>
            <person name="Gabel C."/>
            <person name="Fuchs M."/>
            <person name="Duesterhoeft A."/>
            <person name="Fritzc C."/>
            <person name="Holzer E."/>
            <person name="Moestl D."/>
            <person name="Hilbert H."/>
            <person name="Borzym K."/>
            <person name="Langer I."/>
            <person name="Beck A."/>
            <person name="Lehrach H."/>
            <person name="Reinhardt R."/>
            <person name="Pohl T.M."/>
            <person name="Eger P."/>
            <person name="Zimmermann W."/>
            <person name="Wedler H."/>
            <person name="Wambutt R."/>
            <person name="Purnelle B."/>
            <person name="Goffeau A."/>
            <person name="Cadieu E."/>
            <person name="Dreano S."/>
            <person name="Gloux S."/>
            <person name="Lelaure V."/>
            <person name="Mottier S."/>
            <person name="Galibert F."/>
            <person name="Aves S.J."/>
            <person name="Xiang Z."/>
            <person name="Hunt C."/>
            <person name="Moore K."/>
            <person name="Hurst S.M."/>
            <person name="Lucas M."/>
            <person name="Rochet M."/>
            <person name="Gaillardin C."/>
            <person name="Tallada V.A."/>
            <person name="Garzon A."/>
            <person name="Thode G."/>
            <person name="Daga R.R."/>
            <person name="Cruzado L."/>
            <person name="Jimenez J."/>
            <person name="Sanchez M."/>
            <person name="del Rey F."/>
            <person name="Benito J."/>
            <person name="Dominguez A."/>
            <person name="Revuelta J.L."/>
            <person name="Moreno S."/>
            <person name="Armstrong J."/>
            <person name="Forsburg S.L."/>
            <person name="Cerutti L."/>
            <person name="Lowe T."/>
            <person name="McCombie W.R."/>
            <person name="Paulsen I."/>
            <person name="Potashkin J."/>
            <person name="Shpakovski G.V."/>
            <person name="Ussery D."/>
            <person name="Barrell B.G."/>
            <person name="Nurse P."/>
        </authorList>
    </citation>
    <scope>NUCLEOTIDE SEQUENCE [LARGE SCALE GENOMIC DNA]</scope>
    <source>
        <strain>972 / ATCC 24843</strain>
    </source>
</reference>
<reference key="2">
    <citation type="journal article" date="2008" name="FEMS Yeast Res.">
        <title>A novel gene, ecl1(+), extends the chronological lifespan in fission yeast.</title>
        <authorList>
            <person name="Ohtsuka H."/>
            <person name="Mita S."/>
            <person name="Ogawa Y."/>
            <person name="Azuma K."/>
            <person name="Ito H."/>
            <person name="Aiba H."/>
        </authorList>
    </citation>
    <scope>FUNCTION</scope>
    <scope>SUBCELLULAR LOCATION</scope>
    <scope>INDUCTION</scope>
</reference>
<evidence type="ECO:0000269" key="1">
    <source>
    </source>
</evidence>
<evidence type="ECO:0000305" key="2"/>
<dbReference type="EMBL" id="CU329672">
    <property type="protein sequence ID" value="CBA11520.1"/>
    <property type="molecule type" value="Genomic_DNA"/>
</dbReference>
<dbReference type="RefSeq" id="XP_002788952.1">
    <property type="nucleotide sequence ID" value="XM_002788906.2"/>
</dbReference>
<dbReference type="BioGRID" id="1028327">
    <property type="interactions" value="10"/>
</dbReference>
<dbReference type="STRING" id="284812.C6Y4D3"/>
<dbReference type="iPTMnet" id="C6Y4D3"/>
<dbReference type="PaxDb" id="4896-SPCC70.12c.1"/>
<dbReference type="EnsemblFungi" id="SPCC70.12c.1">
    <property type="protein sequence ID" value="SPCC70.12c.1:pep"/>
    <property type="gene ID" value="SPCC70.12c"/>
</dbReference>
<dbReference type="PomBase" id="SPCC70.12c">
    <property type="gene designation" value="ecl1"/>
</dbReference>
<dbReference type="VEuPathDB" id="FungiDB:SPCC70.12c"/>
<dbReference type="HOGENOM" id="CLU_2528757_0_0_1"/>
<dbReference type="InParanoid" id="C6Y4D3"/>
<dbReference type="PRO" id="PR:C6Y4D3"/>
<dbReference type="Proteomes" id="UP000002485">
    <property type="component" value="Chromosome III"/>
</dbReference>
<dbReference type="GO" id="GO:0005634">
    <property type="term" value="C:nucleus"/>
    <property type="evidence" value="ECO:0000314"/>
    <property type="project" value="PomBase"/>
</dbReference>
<dbReference type="GO" id="GO:0008270">
    <property type="term" value="F:zinc ion binding"/>
    <property type="evidence" value="ECO:0000269"/>
    <property type="project" value="PomBase"/>
</dbReference>
<dbReference type="GO" id="GO:0000747">
    <property type="term" value="P:conjugation with cellular fusion"/>
    <property type="evidence" value="ECO:0000315"/>
    <property type="project" value="PomBase"/>
</dbReference>
<dbReference type="InterPro" id="IPR024368">
    <property type="entry name" value="Ecl1/2/3"/>
</dbReference>
<dbReference type="Pfam" id="PF12855">
    <property type="entry name" value="Ecl1"/>
    <property type="match status" value="1"/>
</dbReference>
<sequence>MDLDFCTVCGATTQDGSLYCSSECHLLDFTKLDTQTTSNISVSSEYQFLVSEHLAHFHRKSMTSADFPTPRFSAYTKLHA</sequence>
<feature type="chain" id="PRO_0000389114" description="Extender of the chronological lifespan protein 1">
    <location>
        <begin position="1"/>
        <end position="80"/>
    </location>
</feature>
<gene>
    <name type="primary">ecl1</name>
    <name type="ORF">SPCC70.12c</name>
</gene>